<name>UVRB_CLOBM</name>
<proteinExistence type="inferred from homology"/>
<sequence length="662" mass="76144">MNQFKVISKFNPTGDQPKAIKSIAKGIEKGEKFQTLIGVTGSGKTFTMANIIEKVQKPTLVLAHNKTLAAQLCSEFREFFPNNAVEYFVSYYDYYQPEAYVAQSDTYIEKDASINDEIDKLRHSATSALFERKDVIIVASVSCIYGLGNPEEYKKLTISLREGMEKDRDEIIKKLVEIQYERNDIDFSRGTFRVKGDVLDIFPASSSSKAVRIEFFGDEIDRIKEFDVLTGETITKLKHISIFPASHFATSKDRLEIAIKNIEEELEERVKELVSQDKILEAQRLKQRTNFDIEMMREVGYCTGIENYSRVLDGRAKGTPPQTLLDYFPQDFLLFIDESHVTLPQVKAMQAGDKSRKDSLVEYGFRLPCAYDNRPLTFKEFENKLNQVVFVSATPAKYELEYSANTAEQVIRPTGLLDPEIIVKPVKGQIDDLYTSIQETIKRGFRILVTTLTKKMAEDLTDYLKEMGVKTRYLHSDIDTIERMKIIHDLRKGEFHVLVGINLLREGLDIPEVALVTILDADKEGFLRSETSLIQTVGRAARNSESKVIMYGDVITKSMEKTIRETNRRRKIQMEHNEKHGIVPKTIIKDIREVIQISDIAEERKEYDNLNEALKSYNNDIDKLIEKYEEEMKEAAQNLQFEKAAHLRDVIYKLKRDKETEL</sequence>
<reference key="1">
    <citation type="journal article" date="2007" name="PLoS ONE">
        <title>Analysis of the neurotoxin complex genes in Clostridium botulinum A1-A4 and B1 strains: BoNT/A3, /Ba4 and /B1 clusters are located within plasmids.</title>
        <authorList>
            <person name="Smith T.J."/>
            <person name="Hill K.K."/>
            <person name="Foley B.T."/>
            <person name="Detter J.C."/>
            <person name="Munk A.C."/>
            <person name="Bruce D.C."/>
            <person name="Doggett N.A."/>
            <person name="Smith L.A."/>
            <person name="Marks J.D."/>
            <person name="Xie G."/>
            <person name="Brettin T.S."/>
        </authorList>
    </citation>
    <scope>NUCLEOTIDE SEQUENCE [LARGE SCALE GENOMIC DNA]</scope>
    <source>
        <strain>Loch Maree / Type A3</strain>
    </source>
</reference>
<protein>
    <recommendedName>
        <fullName evidence="1">UvrABC system protein B</fullName>
        <shortName evidence="1">Protein UvrB</shortName>
    </recommendedName>
    <alternativeName>
        <fullName evidence="1">Excinuclease ABC subunit B</fullName>
    </alternativeName>
</protein>
<accession>B1L280</accession>
<evidence type="ECO:0000255" key="1">
    <source>
        <dbReference type="HAMAP-Rule" id="MF_00204"/>
    </source>
</evidence>
<gene>
    <name evidence="1" type="primary">uvrB</name>
    <name type="ordered locus">CLK_2819</name>
</gene>
<feature type="chain" id="PRO_1000099545" description="UvrABC system protein B">
    <location>
        <begin position="1"/>
        <end position="662"/>
    </location>
</feature>
<feature type="domain" description="Helicase ATP-binding" evidence="1">
    <location>
        <begin position="25"/>
        <end position="182"/>
    </location>
</feature>
<feature type="domain" description="Helicase C-terminal" evidence="1">
    <location>
        <begin position="429"/>
        <end position="595"/>
    </location>
</feature>
<feature type="domain" description="UVR" evidence="1">
    <location>
        <begin position="622"/>
        <end position="657"/>
    </location>
</feature>
<feature type="short sequence motif" description="Beta-hairpin">
    <location>
        <begin position="91"/>
        <end position="114"/>
    </location>
</feature>
<feature type="binding site" evidence="1">
    <location>
        <begin position="38"/>
        <end position="45"/>
    </location>
    <ligand>
        <name>ATP</name>
        <dbReference type="ChEBI" id="CHEBI:30616"/>
    </ligand>
</feature>
<dbReference type="EMBL" id="CP000962">
    <property type="protein sequence ID" value="ACA55880.1"/>
    <property type="molecule type" value="Genomic_DNA"/>
</dbReference>
<dbReference type="RefSeq" id="WP_012343804.1">
    <property type="nucleotide sequence ID" value="NC_010520.1"/>
</dbReference>
<dbReference type="SMR" id="B1L280"/>
<dbReference type="KEGG" id="cbl:CLK_2819"/>
<dbReference type="HOGENOM" id="CLU_009621_2_1_9"/>
<dbReference type="GO" id="GO:0005737">
    <property type="term" value="C:cytoplasm"/>
    <property type="evidence" value="ECO:0007669"/>
    <property type="project" value="UniProtKB-SubCell"/>
</dbReference>
<dbReference type="GO" id="GO:0009380">
    <property type="term" value="C:excinuclease repair complex"/>
    <property type="evidence" value="ECO:0007669"/>
    <property type="project" value="InterPro"/>
</dbReference>
<dbReference type="GO" id="GO:0005524">
    <property type="term" value="F:ATP binding"/>
    <property type="evidence" value="ECO:0007669"/>
    <property type="project" value="UniProtKB-UniRule"/>
</dbReference>
<dbReference type="GO" id="GO:0016887">
    <property type="term" value="F:ATP hydrolysis activity"/>
    <property type="evidence" value="ECO:0007669"/>
    <property type="project" value="InterPro"/>
</dbReference>
<dbReference type="GO" id="GO:0003677">
    <property type="term" value="F:DNA binding"/>
    <property type="evidence" value="ECO:0007669"/>
    <property type="project" value="UniProtKB-UniRule"/>
</dbReference>
<dbReference type="GO" id="GO:0009381">
    <property type="term" value="F:excinuclease ABC activity"/>
    <property type="evidence" value="ECO:0007669"/>
    <property type="project" value="UniProtKB-UniRule"/>
</dbReference>
<dbReference type="GO" id="GO:0004386">
    <property type="term" value="F:helicase activity"/>
    <property type="evidence" value="ECO:0007669"/>
    <property type="project" value="UniProtKB-KW"/>
</dbReference>
<dbReference type="GO" id="GO:0006289">
    <property type="term" value="P:nucleotide-excision repair"/>
    <property type="evidence" value="ECO:0007669"/>
    <property type="project" value="UniProtKB-UniRule"/>
</dbReference>
<dbReference type="GO" id="GO:0009432">
    <property type="term" value="P:SOS response"/>
    <property type="evidence" value="ECO:0007669"/>
    <property type="project" value="UniProtKB-UniRule"/>
</dbReference>
<dbReference type="CDD" id="cd17916">
    <property type="entry name" value="DEXHc_UvrB"/>
    <property type="match status" value="1"/>
</dbReference>
<dbReference type="CDD" id="cd18790">
    <property type="entry name" value="SF2_C_UvrB"/>
    <property type="match status" value="1"/>
</dbReference>
<dbReference type="Gene3D" id="3.40.50.300">
    <property type="entry name" value="P-loop containing nucleotide triphosphate hydrolases"/>
    <property type="match status" value="3"/>
</dbReference>
<dbReference type="Gene3D" id="4.10.860.10">
    <property type="entry name" value="UVR domain"/>
    <property type="match status" value="1"/>
</dbReference>
<dbReference type="HAMAP" id="MF_00204">
    <property type="entry name" value="UvrB"/>
    <property type="match status" value="1"/>
</dbReference>
<dbReference type="InterPro" id="IPR006935">
    <property type="entry name" value="Helicase/UvrB_N"/>
</dbReference>
<dbReference type="InterPro" id="IPR014001">
    <property type="entry name" value="Helicase_ATP-bd"/>
</dbReference>
<dbReference type="InterPro" id="IPR001650">
    <property type="entry name" value="Helicase_C-like"/>
</dbReference>
<dbReference type="InterPro" id="IPR027417">
    <property type="entry name" value="P-loop_NTPase"/>
</dbReference>
<dbReference type="InterPro" id="IPR001943">
    <property type="entry name" value="UVR_dom"/>
</dbReference>
<dbReference type="InterPro" id="IPR036876">
    <property type="entry name" value="UVR_dom_sf"/>
</dbReference>
<dbReference type="InterPro" id="IPR004807">
    <property type="entry name" value="UvrB"/>
</dbReference>
<dbReference type="InterPro" id="IPR041471">
    <property type="entry name" value="UvrB_inter"/>
</dbReference>
<dbReference type="InterPro" id="IPR024759">
    <property type="entry name" value="UvrB_YAD/RRR_dom"/>
</dbReference>
<dbReference type="NCBIfam" id="NF003673">
    <property type="entry name" value="PRK05298.1"/>
    <property type="match status" value="1"/>
</dbReference>
<dbReference type="NCBIfam" id="TIGR00631">
    <property type="entry name" value="uvrb"/>
    <property type="match status" value="1"/>
</dbReference>
<dbReference type="PANTHER" id="PTHR24029">
    <property type="entry name" value="UVRABC SYSTEM PROTEIN B"/>
    <property type="match status" value="1"/>
</dbReference>
<dbReference type="PANTHER" id="PTHR24029:SF0">
    <property type="entry name" value="UVRABC SYSTEM PROTEIN B"/>
    <property type="match status" value="1"/>
</dbReference>
<dbReference type="Pfam" id="PF00271">
    <property type="entry name" value="Helicase_C"/>
    <property type="match status" value="1"/>
</dbReference>
<dbReference type="Pfam" id="PF04851">
    <property type="entry name" value="ResIII"/>
    <property type="match status" value="1"/>
</dbReference>
<dbReference type="Pfam" id="PF02151">
    <property type="entry name" value="UVR"/>
    <property type="match status" value="1"/>
</dbReference>
<dbReference type="Pfam" id="PF12344">
    <property type="entry name" value="UvrB"/>
    <property type="match status" value="1"/>
</dbReference>
<dbReference type="Pfam" id="PF17757">
    <property type="entry name" value="UvrB_inter"/>
    <property type="match status" value="1"/>
</dbReference>
<dbReference type="SMART" id="SM00487">
    <property type="entry name" value="DEXDc"/>
    <property type="match status" value="1"/>
</dbReference>
<dbReference type="SMART" id="SM00490">
    <property type="entry name" value="HELICc"/>
    <property type="match status" value="1"/>
</dbReference>
<dbReference type="SUPFAM" id="SSF46600">
    <property type="entry name" value="C-terminal UvrC-binding domain of UvrB"/>
    <property type="match status" value="1"/>
</dbReference>
<dbReference type="SUPFAM" id="SSF52540">
    <property type="entry name" value="P-loop containing nucleoside triphosphate hydrolases"/>
    <property type="match status" value="2"/>
</dbReference>
<dbReference type="PROSITE" id="PS51192">
    <property type="entry name" value="HELICASE_ATP_BIND_1"/>
    <property type="match status" value="1"/>
</dbReference>
<dbReference type="PROSITE" id="PS51194">
    <property type="entry name" value="HELICASE_CTER"/>
    <property type="match status" value="1"/>
</dbReference>
<dbReference type="PROSITE" id="PS50151">
    <property type="entry name" value="UVR"/>
    <property type="match status" value="1"/>
</dbReference>
<keyword id="KW-0067">ATP-binding</keyword>
<keyword id="KW-0963">Cytoplasm</keyword>
<keyword id="KW-0227">DNA damage</keyword>
<keyword id="KW-0228">DNA excision</keyword>
<keyword id="KW-0234">DNA repair</keyword>
<keyword id="KW-0267">Excision nuclease</keyword>
<keyword id="KW-0347">Helicase</keyword>
<keyword id="KW-0378">Hydrolase</keyword>
<keyword id="KW-0547">Nucleotide-binding</keyword>
<keyword id="KW-0742">SOS response</keyword>
<organism>
    <name type="scientific">Clostridium botulinum (strain Loch Maree / Type A3)</name>
    <dbReference type="NCBI Taxonomy" id="498214"/>
    <lineage>
        <taxon>Bacteria</taxon>
        <taxon>Bacillati</taxon>
        <taxon>Bacillota</taxon>
        <taxon>Clostridia</taxon>
        <taxon>Eubacteriales</taxon>
        <taxon>Clostridiaceae</taxon>
        <taxon>Clostridium</taxon>
    </lineage>
</organism>
<comment type="function">
    <text evidence="1">The UvrABC repair system catalyzes the recognition and processing of DNA lesions. A damage recognition complex composed of 2 UvrA and 2 UvrB subunits scans DNA for abnormalities. Upon binding of the UvrA(2)B(2) complex to a putative damaged site, the DNA wraps around one UvrB monomer. DNA wrap is dependent on ATP binding by UvrB and probably causes local melting of the DNA helix, facilitating insertion of UvrB beta-hairpin between the DNA strands. Then UvrB probes one DNA strand for the presence of a lesion. If a lesion is found the UvrA subunits dissociate and the UvrB-DNA preincision complex is formed. This complex is subsequently bound by UvrC and the second UvrB is released. If no lesion is found, the DNA wraps around the other UvrB subunit that will check the other stand for damage.</text>
</comment>
<comment type="subunit">
    <text evidence="1">Forms a heterotetramer with UvrA during the search for lesions. Interacts with UvrC in an incision complex.</text>
</comment>
<comment type="subcellular location">
    <subcellularLocation>
        <location evidence="1">Cytoplasm</location>
    </subcellularLocation>
</comment>
<comment type="domain">
    <text evidence="1">The beta-hairpin motif is involved in DNA binding.</text>
</comment>
<comment type="similarity">
    <text evidence="1">Belongs to the UvrB family.</text>
</comment>